<feature type="chain" id="PRO_1000092369" description="Elongation factor 4">
    <location>
        <begin position="1"/>
        <end position="598"/>
    </location>
</feature>
<feature type="domain" description="tr-type G">
    <location>
        <begin position="4"/>
        <end position="186"/>
    </location>
</feature>
<feature type="binding site" evidence="1">
    <location>
        <begin position="16"/>
        <end position="21"/>
    </location>
    <ligand>
        <name>GTP</name>
        <dbReference type="ChEBI" id="CHEBI:37565"/>
    </ligand>
</feature>
<feature type="binding site" evidence="1">
    <location>
        <begin position="133"/>
        <end position="136"/>
    </location>
    <ligand>
        <name>GTP</name>
        <dbReference type="ChEBI" id="CHEBI:37565"/>
    </ligand>
</feature>
<organism>
    <name type="scientific">Alteromonas mediterranea (strain DSM 17117 / CIP 110805 / LMG 28347 / Deep ecotype)</name>
    <dbReference type="NCBI Taxonomy" id="1774373"/>
    <lineage>
        <taxon>Bacteria</taxon>
        <taxon>Pseudomonadati</taxon>
        <taxon>Pseudomonadota</taxon>
        <taxon>Gammaproteobacteria</taxon>
        <taxon>Alteromonadales</taxon>
        <taxon>Alteromonadaceae</taxon>
        <taxon>Alteromonas/Salinimonas group</taxon>
        <taxon>Alteromonas</taxon>
    </lineage>
</organism>
<keyword id="KW-0997">Cell inner membrane</keyword>
<keyword id="KW-1003">Cell membrane</keyword>
<keyword id="KW-0342">GTP-binding</keyword>
<keyword id="KW-0378">Hydrolase</keyword>
<keyword id="KW-0472">Membrane</keyword>
<keyword id="KW-0547">Nucleotide-binding</keyword>
<keyword id="KW-0648">Protein biosynthesis</keyword>
<dbReference type="EC" id="3.6.5.n1" evidence="1"/>
<dbReference type="EMBL" id="CP001103">
    <property type="protein sequence ID" value="AEA98641.1"/>
    <property type="molecule type" value="Genomic_DNA"/>
</dbReference>
<dbReference type="RefSeq" id="WP_012517524.1">
    <property type="nucleotide sequence ID" value="NC_011138.3"/>
</dbReference>
<dbReference type="SMR" id="B4RVA8"/>
<dbReference type="KEGG" id="amc:MADE_1012525"/>
<dbReference type="HOGENOM" id="CLU_009995_3_3_6"/>
<dbReference type="Proteomes" id="UP000001870">
    <property type="component" value="Chromosome"/>
</dbReference>
<dbReference type="GO" id="GO:0005886">
    <property type="term" value="C:plasma membrane"/>
    <property type="evidence" value="ECO:0007669"/>
    <property type="project" value="UniProtKB-SubCell"/>
</dbReference>
<dbReference type="GO" id="GO:0005525">
    <property type="term" value="F:GTP binding"/>
    <property type="evidence" value="ECO:0007669"/>
    <property type="project" value="UniProtKB-UniRule"/>
</dbReference>
<dbReference type="GO" id="GO:0003924">
    <property type="term" value="F:GTPase activity"/>
    <property type="evidence" value="ECO:0007669"/>
    <property type="project" value="UniProtKB-UniRule"/>
</dbReference>
<dbReference type="GO" id="GO:0097216">
    <property type="term" value="F:guanosine tetraphosphate binding"/>
    <property type="evidence" value="ECO:0007669"/>
    <property type="project" value="UniProtKB-ARBA"/>
</dbReference>
<dbReference type="GO" id="GO:0043022">
    <property type="term" value="F:ribosome binding"/>
    <property type="evidence" value="ECO:0007669"/>
    <property type="project" value="UniProtKB-UniRule"/>
</dbReference>
<dbReference type="GO" id="GO:0003746">
    <property type="term" value="F:translation elongation factor activity"/>
    <property type="evidence" value="ECO:0007669"/>
    <property type="project" value="UniProtKB-UniRule"/>
</dbReference>
<dbReference type="GO" id="GO:0045727">
    <property type="term" value="P:positive regulation of translation"/>
    <property type="evidence" value="ECO:0007669"/>
    <property type="project" value="UniProtKB-UniRule"/>
</dbReference>
<dbReference type="CDD" id="cd03699">
    <property type="entry name" value="EF4_II"/>
    <property type="match status" value="1"/>
</dbReference>
<dbReference type="CDD" id="cd16260">
    <property type="entry name" value="EF4_III"/>
    <property type="match status" value="1"/>
</dbReference>
<dbReference type="CDD" id="cd01890">
    <property type="entry name" value="LepA"/>
    <property type="match status" value="1"/>
</dbReference>
<dbReference type="CDD" id="cd03709">
    <property type="entry name" value="lepA_C"/>
    <property type="match status" value="1"/>
</dbReference>
<dbReference type="FunFam" id="3.40.50.300:FF:000078">
    <property type="entry name" value="Elongation factor 4"/>
    <property type="match status" value="1"/>
</dbReference>
<dbReference type="FunFam" id="2.40.30.10:FF:000015">
    <property type="entry name" value="Translation factor GUF1, mitochondrial"/>
    <property type="match status" value="1"/>
</dbReference>
<dbReference type="FunFam" id="3.30.70.240:FF:000007">
    <property type="entry name" value="Translation factor GUF1, mitochondrial"/>
    <property type="match status" value="1"/>
</dbReference>
<dbReference type="FunFam" id="3.30.70.2570:FF:000001">
    <property type="entry name" value="Translation factor GUF1, mitochondrial"/>
    <property type="match status" value="1"/>
</dbReference>
<dbReference type="FunFam" id="3.30.70.870:FF:000004">
    <property type="entry name" value="Translation factor GUF1, mitochondrial"/>
    <property type="match status" value="1"/>
</dbReference>
<dbReference type="Gene3D" id="3.30.70.240">
    <property type="match status" value="1"/>
</dbReference>
<dbReference type="Gene3D" id="3.30.70.2570">
    <property type="entry name" value="Elongation factor 4, C-terminal domain"/>
    <property type="match status" value="1"/>
</dbReference>
<dbReference type="Gene3D" id="3.30.70.870">
    <property type="entry name" value="Elongation Factor G (Translational Gtpase), domain 3"/>
    <property type="match status" value="1"/>
</dbReference>
<dbReference type="Gene3D" id="3.40.50.300">
    <property type="entry name" value="P-loop containing nucleotide triphosphate hydrolases"/>
    <property type="match status" value="1"/>
</dbReference>
<dbReference type="Gene3D" id="2.40.30.10">
    <property type="entry name" value="Translation factors"/>
    <property type="match status" value="1"/>
</dbReference>
<dbReference type="HAMAP" id="MF_00071">
    <property type="entry name" value="LepA"/>
    <property type="match status" value="1"/>
</dbReference>
<dbReference type="InterPro" id="IPR006297">
    <property type="entry name" value="EF-4"/>
</dbReference>
<dbReference type="InterPro" id="IPR035647">
    <property type="entry name" value="EFG_III/V"/>
</dbReference>
<dbReference type="InterPro" id="IPR000640">
    <property type="entry name" value="EFG_V-like"/>
</dbReference>
<dbReference type="InterPro" id="IPR004161">
    <property type="entry name" value="EFTu-like_2"/>
</dbReference>
<dbReference type="InterPro" id="IPR031157">
    <property type="entry name" value="G_TR_CS"/>
</dbReference>
<dbReference type="InterPro" id="IPR038363">
    <property type="entry name" value="LepA_C_sf"/>
</dbReference>
<dbReference type="InterPro" id="IPR013842">
    <property type="entry name" value="LepA_CTD"/>
</dbReference>
<dbReference type="InterPro" id="IPR035654">
    <property type="entry name" value="LepA_IV"/>
</dbReference>
<dbReference type="InterPro" id="IPR027417">
    <property type="entry name" value="P-loop_NTPase"/>
</dbReference>
<dbReference type="InterPro" id="IPR005225">
    <property type="entry name" value="Small_GTP-bd"/>
</dbReference>
<dbReference type="InterPro" id="IPR000795">
    <property type="entry name" value="T_Tr_GTP-bd_dom"/>
</dbReference>
<dbReference type="InterPro" id="IPR009000">
    <property type="entry name" value="Transl_B-barrel_sf"/>
</dbReference>
<dbReference type="NCBIfam" id="TIGR01393">
    <property type="entry name" value="lepA"/>
    <property type="match status" value="1"/>
</dbReference>
<dbReference type="NCBIfam" id="TIGR00231">
    <property type="entry name" value="small_GTP"/>
    <property type="match status" value="1"/>
</dbReference>
<dbReference type="PANTHER" id="PTHR43512:SF4">
    <property type="entry name" value="TRANSLATION FACTOR GUF1 HOMOLOG, CHLOROPLASTIC"/>
    <property type="match status" value="1"/>
</dbReference>
<dbReference type="PANTHER" id="PTHR43512">
    <property type="entry name" value="TRANSLATION FACTOR GUF1-RELATED"/>
    <property type="match status" value="1"/>
</dbReference>
<dbReference type="Pfam" id="PF00679">
    <property type="entry name" value="EFG_C"/>
    <property type="match status" value="1"/>
</dbReference>
<dbReference type="Pfam" id="PF00009">
    <property type="entry name" value="GTP_EFTU"/>
    <property type="match status" value="1"/>
</dbReference>
<dbReference type="Pfam" id="PF03144">
    <property type="entry name" value="GTP_EFTU_D2"/>
    <property type="match status" value="1"/>
</dbReference>
<dbReference type="Pfam" id="PF06421">
    <property type="entry name" value="LepA_C"/>
    <property type="match status" value="1"/>
</dbReference>
<dbReference type="PRINTS" id="PR00315">
    <property type="entry name" value="ELONGATNFCT"/>
</dbReference>
<dbReference type="SMART" id="SM00838">
    <property type="entry name" value="EFG_C"/>
    <property type="match status" value="1"/>
</dbReference>
<dbReference type="SUPFAM" id="SSF54980">
    <property type="entry name" value="EF-G C-terminal domain-like"/>
    <property type="match status" value="2"/>
</dbReference>
<dbReference type="SUPFAM" id="SSF52540">
    <property type="entry name" value="P-loop containing nucleoside triphosphate hydrolases"/>
    <property type="match status" value="1"/>
</dbReference>
<dbReference type="SUPFAM" id="SSF50447">
    <property type="entry name" value="Translation proteins"/>
    <property type="match status" value="1"/>
</dbReference>
<dbReference type="PROSITE" id="PS00301">
    <property type="entry name" value="G_TR_1"/>
    <property type="match status" value="1"/>
</dbReference>
<dbReference type="PROSITE" id="PS51722">
    <property type="entry name" value="G_TR_2"/>
    <property type="match status" value="1"/>
</dbReference>
<gene>
    <name evidence="1" type="primary">lepA</name>
    <name type="ordered locus">MADE_1012525</name>
</gene>
<comment type="function">
    <text evidence="1">Required for accurate and efficient protein synthesis under certain stress conditions. May act as a fidelity factor of the translation reaction, by catalyzing a one-codon backward translocation of tRNAs on improperly translocated ribosomes. Back-translocation proceeds from a post-translocation (POST) complex to a pre-translocation (PRE) complex, thus giving elongation factor G a second chance to translocate the tRNAs correctly. Binds to ribosomes in a GTP-dependent manner.</text>
</comment>
<comment type="catalytic activity">
    <reaction evidence="1">
        <text>GTP + H2O = GDP + phosphate + H(+)</text>
        <dbReference type="Rhea" id="RHEA:19669"/>
        <dbReference type="ChEBI" id="CHEBI:15377"/>
        <dbReference type="ChEBI" id="CHEBI:15378"/>
        <dbReference type="ChEBI" id="CHEBI:37565"/>
        <dbReference type="ChEBI" id="CHEBI:43474"/>
        <dbReference type="ChEBI" id="CHEBI:58189"/>
        <dbReference type="EC" id="3.6.5.n1"/>
    </reaction>
</comment>
<comment type="subcellular location">
    <subcellularLocation>
        <location evidence="1">Cell inner membrane</location>
        <topology evidence="1">Peripheral membrane protein</topology>
        <orientation evidence="1">Cytoplasmic side</orientation>
    </subcellularLocation>
</comment>
<comment type="similarity">
    <text evidence="1">Belongs to the TRAFAC class translation factor GTPase superfamily. Classic translation factor GTPase family. LepA subfamily.</text>
</comment>
<reference key="1">
    <citation type="journal article" date="2008" name="ISME J.">
        <title>Comparative genomics of two ecotypes of the marine planktonic copiotroph Alteromonas macleodii suggests alternative lifestyles associated with different kinds of particulate organic matter.</title>
        <authorList>
            <person name="Ivars-Martinez E."/>
            <person name="Martin-Cuadrado A.-B."/>
            <person name="D'Auria G."/>
            <person name="Mira A."/>
            <person name="Ferriera S."/>
            <person name="Johnson J."/>
            <person name="Friedman R."/>
            <person name="Rodriguez-Valera F."/>
        </authorList>
    </citation>
    <scope>NUCLEOTIDE SEQUENCE [LARGE SCALE GENOMIC DNA]</scope>
    <source>
        <strain>DSM 17117 / CIP 110805 / LMG 28347 / Deep ecotype</strain>
    </source>
</reference>
<proteinExistence type="inferred from homology"/>
<sequence length="598" mass="66285">MQQSHIRNFSIIAHIDHGKSTLSDRLIQHCGGLTDREMAEQVLDSMDLEKERGITIKAQSVTLNYEARDGETYQLNFIDTPGHVDFTYEVSRSLAACEGALLVVDAGQGVEAQTLANCYTAIEMDMEVVPVLNKIDLPQAEPDRVAEEIEDIVGIDALDAVRCSAKTGIGIEDVLEVIVNKIPPPEGDREAPLKALIIDSWFDNYQGVVSLVRIVEGQLNKKDKIQIMSNGQTHQVDKIGVFTPKPLDTGILRAGEVGFIIAGIKDIQGAPVGDTITLAREPADAMLPGFKKVKPQVYAGIFPISSDDYEDFRDALAKLSLNDASLFYEPESSAALGFGFRIGFLGMLHMEIIQERLEREYDLGLITTAPTVIYEVETTKGETLTVDSPAKLPPVNDIAEIREPMVEANILVPQEYLGNVITLCVEKRGMQTNMTYHGKQVAVTYELPMAEVVLDFFDRLKSTSRGFASLDYNFKRFQTSDMVRVDILINGERVDALAVITHRENSQGRGRELVEKLRELIPRQMFDIAIQAAIGNHVVARSTVKQLRKNVIAKCYGGDVSRKKKLLQKQKEGKKRMKQVGNVELPQDAFLAVLKVGK</sequence>
<evidence type="ECO:0000255" key="1">
    <source>
        <dbReference type="HAMAP-Rule" id="MF_00071"/>
    </source>
</evidence>
<name>LEPA_ALTMD</name>
<protein>
    <recommendedName>
        <fullName evidence="1">Elongation factor 4</fullName>
        <shortName evidence="1">EF-4</shortName>
        <ecNumber evidence="1">3.6.5.n1</ecNumber>
    </recommendedName>
    <alternativeName>
        <fullName evidence="1">Ribosomal back-translocase LepA</fullName>
    </alternativeName>
</protein>
<accession>B4RVA8</accession>
<accession>F2G236</accession>